<reference key="1">
    <citation type="journal article" date="2006" name="J. Bacteriol.">
        <title>Pathogenomic sequence analysis of Bacillus cereus and Bacillus thuringiensis isolates closely related to Bacillus anthracis.</title>
        <authorList>
            <person name="Han C.S."/>
            <person name="Xie G."/>
            <person name="Challacombe J.F."/>
            <person name="Altherr M.R."/>
            <person name="Bhotika S.S."/>
            <person name="Bruce D."/>
            <person name="Campbell C.S."/>
            <person name="Campbell M.L."/>
            <person name="Chen J."/>
            <person name="Chertkov O."/>
            <person name="Cleland C."/>
            <person name="Dimitrijevic M."/>
            <person name="Doggett N.A."/>
            <person name="Fawcett J.J."/>
            <person name="Glavina T."/>
            <person name="Goodwin L.A."/>
            <person name="Hill K.K."/>
            <person name="Hitchcock P."/>
            <person name="Jackson P.J."/>
            <person name="Keim P."/>
            <person name="Kewalramani A.R."/>
            <person name="Longmire J."/>
            <person name="Lucas S."/>
            <person name="Malfatti S."/>
            <person name="McMurry K."/>
            <person name="Meincke L.J."/>
            <person name="Misra M."/>
            <person name="Moseman B.L."/>
            <person name="Mundt M."/>
            <person name="Munk A.C."/>
            <person name="Okinaka R.T."/>
            <person name="Parson-Quintana B."/>
            <person name="Reilly L.P."/>
            <person name="Richardson P."/>
            <person name="Robinson D.L."/>
            <person name="Rubin E."/>
            <person name="Saunders E."/>
            <person name="Tapia R."/>
            <person name="Tesmer J.G."/>
            <person name="Thayer N."/>
            <person name="Thompson L.S."/>
            <person name="Tice H."/>
            <person name="Ticknor L.O."/>
            <person name="Wills P.L."/>
            <person name="Brettin T.S."/>
            <person name="Gilna P."/>
        </authorList>
    </citation>
    <scope>NUCLEOTIDE SEQUENCE [LARGE SCALE GENOMIC DNA]</scope>
    <source>
        <strain>ZK / E33L</strain>
    </source>
</reference>
<name>Y1074_BACCZ</name>
<proteinExistence type="inferred from homology"/>
<evidence type="ECO:0000255" key="1">
    <source>
        <dbReference type="HAMAP-Rule" id="MF_01860"/>
    </source>
</evidence>
<comment type="similarity">
    <text evidence="1">Belongs to the UPF0736 family.</text>
</comment>
<accession>Q63EI7</accession>
<organism>
    <name type="scientific">Bacillus cereus (strain ZK / E33L)</name>
    <dbReference type="NCBI Taxonomy" id="288681"/>
    <lineage>
        <taxon>Bacteria</taxon>
        <taxon>Bacillati</taxon>
        <taxon>Bacillota</taxon>
        <taxon>Bacilli</taxon>
        <taxon>Bacillales</taxon>
        <taxon>Bacillaceae</taxon>
        <taxon>Bacillus</taxon>
        <taxon>Bacillus cereus group</taxon>
    </lineage>
</organism>
<sequence>MLYLHDVWVNWFEGEENGYNVCHFYEWRKDDTIELLDQVPLLKVDSTLYHYIENELLELPQKLLEDVHHKAYIRKNHERLQQEYCFVVTDGKGIIAIDTIGYNVPIRKSRLIPRQEQMVYEMVENVQAEKYEFQVEEMEKEHHILSPSPFVMNGLTRKERQLKQLLFMALDQLHTTKNTAEIRYWFTEWDPSAYGMVQHMEFEDIWAKLYDEAKAGWSEKHEQLCERLVKGQPFFEKLWEMENEQKVN</sequence>
<dbReference type="EMBL" id="CP000001">
    <property type="protein sequence ID" value="AAU19173.1"/>
    <property type="molecule type" value="Genomic_DNA"/>
</dbReference>
<dbReference type="RefSeq" id="WP_000966133.1">
    <property type="nucleotide sequence ID" value="NZ_CP009968.1"/>
</dbReference>
<dbReference type="SMR" id="Q63EI7"/>
<dbReference type="KEGG" id="bcz:BCE33L1074"/>
<dbReference type="PATRIC" id="fig|288681.22.peg.4490"/>
<dbReference type="Proteomes" id="UP000002612">
    <property type="component" value="Chromosome"/>
</dbReference>
<dbReference type="HAMAP" id="MF_01860">
    <property type="entry name" value="UPF0736"/>
    <property type="match status" value="1"/>
</dbReference>
<dbReference type="InterPro" id="IPR020909">
    <property type="entry name" value="UPF0736"/>
</dbReference>
<dbReference type="Pfam" id="PF12227">
    <property type="entry name" value="DUF3603"/>
    <property type="match status" value="1"/>
</dbReference>
<feature type="chain" id="PRO_0000369141" description="UPF0736 protein BCE33L1074">
    <location>
        <begin position="1"/>
        <end position="248"/>
    </location>
</feature>
<protein>
    <recommendedName>
        <fullName evidence="1">UPF0736 protein BCE33L1074</fullName>
    </recommendedName>
</protein>
<gene>
    <name type="ordered locus">BCE33L1074</name>
</gene>